<organism>
    <name type="scientific">African swine fever virus (strain Badajoz 1971 Vero-adapted)</name>
    <name type="common">Ba71V</name>
    <name type="synonym">ASFV</name>
    <dbReference type="NCBI Taxonomy" id="10498"/>
    <lineage>
        <taxon>Viruses</taxon>
        <taxon>Varidnaviria</taxon>
        <taxon>Bamfordvirae</taxon>
        <taxon>Nucleocytoviricota</taxon>
        <taxon>Pokkesviricetes</taxon>
        <taxon>Asfuvirales</taxon>
        <taxon>Asfarviridae</taxon>
        <taxon>Asfivirus</taxon>
        <taxon>African swine fever virus</taxon>
    </lineage>
</organism>
<organismHost>
    <name type="scientific">Ornithodoros</name>
    <name type="common">relapsing fever ticks</name>
    <dbReference type="NCBI Taxonomy" id="6937"/>
</organismHost>
<organismHost>
    <name type="scientific">Sus scrofa</name>
    <name type="common">Pig</name>
    <dbReference type="NCBI Taxonomy" id="9823"/>
</organismHost>
<evidence type="ECO:0000255" key="1"/>
<evidence type="ECO:0000269" key="2">
    <source>
    </source>
</evidence>
<evidence type="ECO:0000269" key="3">
    <source>
    </source>
</evidence>
<evidence type="ECO:0000305" key="4"/>
<reference key="1">
    <citation type="journal article" date="1995" name="Virology">
        <title>Analysis of the complete nucleotide sequence of African swine fever virus.</title>
        <authorList>
            <person name="Yanez R.J."/>
            <person name="Rodriguez J.M."/>
            <person name="Nogal M.L."/>
            <person name="Yuste L."/>
            <person name="Enriquez C."/>
            <person name="Rodriguez J.F."/>
            <person name="Vinuela E."/>
        </authorList>
    </citation>
    <scope>NUCLEOTIDE SEQUENCE [LARGE SCALE GENOMIC DNA]</scope>
</reference>
<reference key="2">
    <citation type="journal article" date="2018" name="J. Virol.">
        <title>A Proteomic Atlas of the African Swine Fever Virus Particle.</title>
        <authorList>
            <person name="Alejo A."/>
            <person name="Matamoros T."/>
            <person name="Guerra M."/>
            <person name="Andres G."/>
        </authorList>
    </citation>
    <scope>SUBCELLULAR LOCATION</scope>
</reference>
<reference key="3">
    <citation type="journal article" date="2020" name="J. Virol.">
        <title>The African Swine Fever Virus Transcriptome.</title>
        <authorList>
            <person name="Cackett G."/>
            <person name="Matelska D."/>
            <person name="Sykora M."/>
            <person name="Portugal R."/>
            <person name="Malecki M."/>
            <person name="Baehler J."/>
            <person name="Dixon L."/>
            <person name="Werner F."/>
        </authorList>
    </citation>
    <scope>INDUCTION</scope>
</reference>
<comment type="subcellular location">
    <subcellularLocation>
        <location evidence="4">Host membrane</location>
        <topology evidence="4">Multi-pass membrane protein</topology>
    </subcellularLocation>
    <subcellularLocation>
        <location evidence="2">Virion</location>
    </subcellularLocation>
</comment>
<comment type="induction">
    <text evidence="3">Expressed in the late phase of the viral replicative cycle.</text>
</comment>
<comment type="similarity">
    <text evidence="4">Belongs to the asfivirus C257R family.</text>
</comment>
<dbReference type="EMBL" id="U18466">
    <property type="protein sequence ID" value="AAA65296.1"/>
    <property type="molecule type" value="Genomic_DNA"/>
</dbReference>
<dbReference type="RefSeq" id="NP_042760.1">
    <property type="nucleotide sequence ID" value="NC_001659.2"/>
</dbReference>
<dbReference type="SMR" id="Q65158"/>
<dbReference type="GeneID" id="22220296"/>
<dbReference type="KEGG" id="vg:22220296"/>
<dbReference type="Proteomes" id="UP000000624">
    <property type="component" value="Segment"/>
</dbReference>
<dbReference type="GO" id="GO:0033644">
    <property type="term" value="C:host cell membrane"/>
    <property type="evidence" value="ECO:0007669"/>
    <property type="project" value="UniProtKB-SubCell"/>
</dbReference>
<dbReference type="GO" id="GO:0016020">
    <property type="term" value="C:membrane"/>
    <property type="evidence" value="ECO:0007669"/>
    <property type="project" value="UniProtKB-KW"/>
</dbReference>
<dbReference type="GO" id="GO:0044423">
    <property type="term" value="C:virion component"/>
    <property type="evidence" value="ECO:0007669"/>
    <property type="project" value="UniProtKB-KW"/>
</dbReference>
<feature type="chain" id="PRO_0000373614" description="Transmembrane protein C257L">
    <location>
        <begin position="1"/>
        <end position="257"/>
    </location>
</feature>
<feature type="transmembrane region" description="Helical" evidence="1">
    <location>
        <begin position="123"/>
        <end position="143"/>
    </location>
</feature>
<feature type="transmembrane region" description="Helical" evidence="1">
    <location>
        <begin position="163"/>
        <end position="183"/>
    </location>
</feature>
<name>VF257_ASFB7</name>
<sequence>MYSVCDVVRDAVAQSHLCACPNDKLPQCKGVTKAPPKCSVFHVAKLQDTKFKWKYTLDPLKAQKLSQIDKDIEKDAITLKLIYGIELSPEDLEWWKMQRCLINKKTGAKGGQFANKYLERQDLELLGYSPTPIIGGDFMFTALPDKVLRTIPVAWDRFLNPAMMIFFLIILLCVILGIFYVLVRNTLRRKQKSKQHQMEIKRFIKEKEQDPYIHTSFESWPADPNKKWKDLIPMYEAQGYCMADYRKKLGMPPGPNC</sequence>
<protein>
    <recommendedName>
        <fullName>Transmembrane protein C257L</fullName>
        <shortName>pC257L</shortName>
    </recommendedName>
</protein>
<gene>
    <name type="ordered locus">Ba71V-066</name>
    <name type="ORF">C257L</name>
</gene>
<proteinExistence type="evidence at transcript level"/>
<accession>Q65158</accession>
<keyword id="KW-1043">Host membrane</keyword>
<keyword id="KW-0426">Late protein</keyword>
<keyword id="KW-0472">Membrane</keyword>
<keyword id="KW-1185">Reference proteome</keyword>
<keyword id="KW-0812">Transmembrane</keyword>
<keyword id="KW-1133">Transmembrane helix</keyword>
<keyword id="KW-0946">Virion</keyword>